<sequence length="239" mass="27518">MGQKINPLGFRLGTTQNHHSFWFAQPKNYSEGLQEDKKIRNCIKNYIQKNRKKGSNRKIEADSSFEVITHNKKMDSGSSSEVITHIEIQKEIDTIHVIIHIGFPNLLKKKGAIEELEKDLQKEVNSVNQRLNIGIEKVKEPYRQPNILAEYIAFQLKNRVSFRKAMKKAIELTKKTDIKGVKVKIAGRLAGKEIARAECIKKGRLPLQTIRAKIDYCCYPIRTIYGVLGVKIWIFVDEE</sequence>
<protein>
    <recommendedName>
        <fullName evidence="2">Small ribosomal subunit protein uS3c</fullName>
    </recommendedName>
    <alternativeName>
        <fullName>30S ribosomal protein S3, chloroplastic</fullName>
    </alternativeName>
</protein>
<accession>P0C485</accession>
<accession>P12146</accession>
<accession>Q6QXY4</accession>
<accession>Q6QY47</accession>
<dbReference type="EMBL" id="X15901">
    <property type="protein sequence ID" value="CAA33934.1"/>
    <property type="molecule type" value="Genomic_DNA"/>
</dbReference>
<dbReference type="EMBL" id="AY522330">
    <property type="protein sequence ID" value="AAS46147.1"/>
    <property type="molecule type" value="Genomic_DNA"/>
</dbReference>
<dbReference type="EMBL" id="AP005683">
    <property type="protein sequence ID" value="BAD33782.1"/>
    <property type="molecule type" value="Genomic_DNA"/>
</dbReference>
<dbReference type="EMBL" id="AP005707">
    <property type="protein sequence ID" value="BAD36259.1"/>
    <property type="molecule type" value="Genomic_DNA"/>
</dbReference>
<dbReference type="PIR" id="JQ0265">
    <property type="entry name" value="R3RZ3"/>
</dbReference>
<dbReference type="RefSeq" id="NP_039424.1">
    <property type="nucleotide sequence ID" value="NC_001320.1"/>
</dbReference>
<dbReference type="SMR" id="P0C485"/>
<dbReference type="FunCoup" id="P0C485">
    <property type="interactions" value="330"/>
</dbReference>
<dbReference type="STRING" id="39947.P0C485"/>
<dbReference type="PaxDb" id="39947-P0C485"/>
<dbReference type="EnsemblPlants" id="transcript-rps3">
    <property type="protein sequence ID" value="cds-CAA33934.1"/>
    <property type="gene ID" value="gene-rps3"/>
</dbReference>
<dbReference type="GeneID" id="3131443"/>
<dbReference type="Gramene" id="transcript-rps3">
    <property type="protein sequence ID" value="cds-CAA33934.1"/>
    <property type="gene ID" value="gene-rps3"/>
</dbReference>
<dbReference type="KEGG" id="osa:3131443"/>
<dbReference type="InParanoid" id="P0C485"/>
<dbReference type="OrthoDB" id="599002at2759"/>
<dbReference type="Proteomes" id="UP000000763">
    <property type="component" value="Chromosome 9"/>
</dbReference>
<dbReference type="Proteomes" id="UP000059680">
    <property type="component" value="Chloroplast"/>
</dbReference>
<dbReference type="GO" id="GO:0009507">
    <property type="term" value="C:chloroplast"/>
    <property type="evidence" value="ECO:0007669"/>
    <property type="project" value="UniProtKB-SubCell"/>
</dbReference>
<dbReference type="GO" id="GO:0022627">
    <property type="term" value="C:cytosolic small ribosomal subunit"/>
    <property type="evidence" value="ECO:0000318"/>
    <property type="project" value="GO_Central"/>
</dbReference>
<dbReference type="GO" id="GO:0009536">
    <property type="term" value="C:plastid"/>
    <property type="evidence" value="ECO:0000305"/>
    <property type="project" value="Gramene"/>
</dbReference>
<dbReference type="GO" id="GO:0019843">
    <property type="term" value="F:rRNA binding"/>
    <property type="evidence" value="ECO:0007669"/>
    <property type="project" value="UniProtKB-KW"/>
</dbReference>
<dbReference type="GO" id="GO:0003735">
    <property type="term" value="F:structural constituent of ribosome"/>
    <property type="evidence" value="ECO:0000318"/>
    <property type="project" value="GO_Central"/>
</dbReference>
<dbReference type="GO" id="GO:0006412">
    <property type="term" value="P:translation"/>
    <property type="evidence" value="ECO:0007669"/>
    <property type="project" value="UniProtKB-UniRule"/>
</dbReference>
<dbReference type="CDD" id="cd02412">
    <property type="entry name" value="KH-II_30S_S3"/>
    <property type="match status" value="1"/>
</dbReference>
<dbReference type="FunFam" id="3.30.1140.32:FF:000003">
    <property type="entry name" value="30S ribosomal protein S3, chloroplastic"/>
    <property type="match status" value="1"/>
</dbReference>
<dbReference type="FunFam" id="3.30.300.20:FF:000008">
    <property type="entry name" value="30S ribosomal protein S3, chloroplastic"/>
    <property type="match status" value="1"/>
</dbReference>
<dbReference type="Gene3D" id="3.30.300.20">
    <property type="match status" value="1"/>
</dbReference>
<dbReference type="Gene3D" id="3.30.1140.32">
    <property type="entry name" value="Ribosomal protein S3, C-terminal domain"/>
    <property type="match status" value="1"/>
</dbReference>
<dbReference type="HAMAP" id="MF_01309_B">
    <property type="entry name" value="Ribosomal_uS3_B"/>
    <property type="match status" value="1"/>
</dbReference>
<dbReference type="InterPro" id="IPR015946">
    <property type="entry name" value="KH_dom-like_a/b"/>
</dbReference>
<dbReference type="InterPro" id="IPR009019">
    <property type="entry name" value="KH_sf_prok-type"/>
</dbReference>
<dbReference type="InterPro" id="IPR036419">
    <property type="entry name" value="Ribosomal_S3_C_sf"/>
</dbReference>
<dbReference type="InterPro" id="IPR005704">
    <property type="entry name" value="Ribosomal_uS3_bac-typ"/>
</dbReference>
<dbReference type="InterPro" id="IPR001351">
    <property type="entry name" value="Ribosomal_uS3_C"/>
</dbReference>
<dbReference type="InterPro" id="IPR018280">
    <property type="entry name" value="Ribosomal_uS3_CS"/>
</dbReference>
<dbReference type="NCBIfam" id="TIGR01009">
    <property type="entry name" value="rpsC_bact"/>
    <property type="match status" value="1"/>
</dbReference>
<dbReference type="PANTHER" id="PTHR11760">
    <property type="entry name" value="30S/40S RIBOSOMAL PROTEIN S3"/>
    <property type="match status" value="1"/>
</dbReference>
<dbReference type="PANTHER" id="PTHR11760:SF42">
    <property type="entry name" value="SMALL RIBOSOMAL SUBUNIT PROTEIN US3C"/>
    <property type="match status" value="1"/>
</dbReference>
<dbReference type="Pfam" id="PF00189">
    <property type="entry name" value="Ribosomal_S3_C"/>
    <property type="match status" value="1"/>
</dbReference>
<dbReference type="SUPFAM" id="SSF54814">
    <property type="entry name" value="Prokaryotic type KH domain (KH-domain type II)"/>
    <property type="match status" value="1"/>
</dbReference>
<dbReference type="SUPFAM" id="SSF54821">
    <property type="entry name" value="Ribosomal protein S3 C-terminal domain"/>
    <property type="match status" value="1"/>
</dbReference>
<dbReference type="PROSITE" id="PS00548">
    <property type="entry name" value="RIBOSOMAL_S3"/>
    <property type="match status" value="1"/>
</dbReference>
<organism>
    <name type="scientific">Oryza sativa subsp. japonica</name>
    <name type="common">Rice</name>
    <dbReference type="NCBI Taxonomy" id="39947"/>
    <lineage>
        <taxon>Eukaryota</taxon>
        <taxon>Viridiplantae</taxon>
        <taxon>Streptophyta</taxon>
        <taxon>Embryophyta</taxon>
        <taxon>Tracheophyta</taxon>
        <taxon>Spermatophyta</taxon>
        <taxon>Magnoliopsida</taxon>
        <taxon>Liliopsida</taxon>
        <taxon>Poales</taxon>
        <taxon>Poaceae</taxon>
        <taxon>BOP clade</taxon>
        <taxon>Oryzoideae</taxon>
        <taxon>Oryzeae</taxon>
        <taxon>Oryzinae</taxon>
        <taxon>Oryza</taxon>
        <taxon>Oryza sativa</taxon>
    </lineage>
</organism>
<comment type="subunit">
    <text evidence="1">Part of the 30S ribosomal subunit.</text>
</comment>
<comment type="subcellular location">
    <subcellularLocation>
        <location>Plastid</location>
        <location>Chloroplast</location>
    </subcellularLocation>
</comment>
<comment type="similarity">
    <text evidence="2">Belongs to the universal ribosomal protein uS3 family.</text>
</comment>
<comment type="caution">
    <text evidence="2">A stretch of the chloroplast genome is duplicated within chromosome 9 resulting in the duplication of the gene. The expression of this duplicated gene has not been demonstrated.</text>
</comment>
<feature type="chain" id="PRO_0000290082" description="Small ribosomal subunit protein uS3c">
    <location>
        <begin position="1"/>
        <end position="239"/>
    </location>
</feature>
<feature type="domain" description="KH type-2">
    <location>
        <begin position="43"/>
        <end position="139"/>
    </location>
</feature>
<proteinExistence type="inferred from homology"/>
<evidence type="ECO:0000250" key="1"/>
<evidence type="ECO:0000305" key="2"/>
<geneLocation type="chloroplast"/>
<keyword id="KW-0150">Chloroplast</keyword>
<keyword id="KW-0934">Plastid</keyword>
<keyword id="KW-1185">Reference proteome</keyword>
<keyword id="KW-0687">Ribonucleoprotein</keyword>
<keyword id="KW-0689">Ribosomal protein</keyword>
<keyword id="KW-0694">RNA-binding</keyword>
<keyword id="KW-0699">rRNA-binding</keyword>
<gene>
    <name type="primary">rps3</name>
    <name type="ORF">Nip111</name>
</gene>
<name>RR3_ORYSJ</name>
<reference key="1">
    <citation type="journal article" date="1989" name="Mol. Gen. Genet.">
        <title>The complete sequence of the rice (Oryza sativa) chloroplast genome: intermolecular recombination between distinct tRNA genes accounts for a major plastid DNA inversion during the evolution of the cereals.</title>
        <authorList>
            <person name="Hiratsuka J."/>
            <person name="Shimada H."/>
            <person name="Whittier R."/>
            <person name="Ishibashi T."/>
            <person name="Sakamoto M."/>
            <person name="Mori M."/>
            <person name="Kondo C."/>
            <person name="Honji Y."/>
            <person name="Sun C.-R."/>
            <person name="Meng B.-Y."/>
            <person name="Li Y.-Q."/>
            <person name="Kanno A."/>
            <person name="Nishizawa Y."/>
            <person name="Hirai A."/>
            <person name="Shinozaki K."/>
            <person name="Sugiura M."/>
        </authorList>
    </citation>
    <scope>NUCLEOTIDE SEQUENCE [LARGE SCALE GENOMIC DNA]</scope>
    <source>
        <strain>cv. Nipponbare</strain>
    </source>
</reference>
<reference key="2">
    <citation type="journal article" date="2004" name="Plant Physiol.">
        <title>A comparison of rice chloroplast genomes.</title>
        <authorList>
            <person name="Tang J."/>
            <person name="Xia H."/>
            <person name="Cao M."/>
            <person name="Zhang X."/>
            <person name="Zeng W."/>
            <person name="Hu S."/>
            <person name="Tong W."/>
            <person name="Wang J."/>
            <person name="Wang J."/>
            <person name="Yu J."/>
            <person name="Yang H."/>
            <person name="Zhu L."/>
        </authorList>
    </citation>
    <scope>NUCLEOTIDE SEQUENCE [LARGE SCALE GENOMIC DNA]</scope>
    <source>
        <strain>cv. Nipponbare</strain>
    </source>
</reference>
<reference key="3">
    <citation type="journal article" date="2005" name="Nature">
        <title>The map-based sequence of the rice genome.</title>
        <authorList>
            <consortium name="International rice genome sequencing project (IRGSP)"/>
        </authorList>
    </citation>
    <scope>NUCLEOTIDE SEQUENCE [LARGE SCALE GENOMIC DNA]</scope>
    <source>
        <strain>cv. Nipponbare</strain>
    </source>
</reference>